<reference key="1">
    <citation type="submission" date="2003-08" db="EMBL/GenBank/DDBJ databases">
        <authorList>
            <consortium name="NIH - Zebrafish Gene Collection (ZGC) project"/>
        </authorList>
    </citation>
    <scope>NUCLEOTIDE SEQUENCE [LARGE SCALE MRNA]</scope>
    <source>
        <strain>SJD</strain>
    </source>
</reference>
<feature type="chain" id="PRO_0000269266" description="Cytoplasmic polyadenylation element-binding protein 4">
    <location>
        <begin position="1"/>
        <end position="635"/>
    </location>
</feature>
<feature type="domain" description="RRM 1" evidence="3">
    <location>
        <begin position="378"/>
        <end position="469"/>
    </location>
</feature>
<feature type="domain" description="RRM 2" evidence="3">
    <location>
        <begin position="486"/>
        <end position="568"/>
    </location>
</feature>
<feature type="region of interest" description="Disordered" evidence="4">
    <location>
        <begin position="1"/>
        <end position="70"/>
    </location>
</feature>
<feature type="region of interest" description="Disordered" evidence="4">
    <location>
        <begin position="149"/>
        <end position="284"/>
    </location>
</feature>
<feature type="region of interest" description="Disordered" evidence="4">
    <location>
        <begin position="337"/>
        <end position="369"/>
    </location>
</feature>
<feature type="compositionally biased region" description="Polar residues" evidence="4">
    <location>
        <begin position="14"/>
        <end position="30"/>
    </location>
</feature>
<feature type="compositionally biased region" description="Basic residues" evidence="4">
    <location>
        <begin position="166"/>
        <end position="182"/>
    </location>
</feature>
<feature type="compositionally biased region" description="Low complexity" evidence="4">
    <location>
        <begin position="216"/>
        <end position="231"/>
    </location>
</feature>
<feature type="compositionally biased region" description="Gly residues" evidence="4">
    <location>
        <begin position="232"/>
        <end position="241"/>
    </location>
</feature>
<feature type="compositionally biased region" description="Polar residues" evidence="4">
    <location>
        <begin position="254"/>
        <end position="283"/>
    </location>
</feature>
<feature type="compositionally biased region" description="Basic and acidic residues" evidence="4">
    <location>
        <begin position="341"/>
        <end position="353"/>
    </location>
</feature>
<evidence type="ECO:0000250" key="1">
    <source>
        <dbReference type="UniProtKB" id="Q17RY0"/>
    </source>
</evidence>
<evidence type="ECO:0000250" key="2">
    <source>
        <dbReference type="UniProtKB" id="Q7TN98"/>
    </source>
</evidence>
<evidence type="ECO:0000255" key="3">
    <source>
        <dbReference type="PROSITE-ProRule" id="PRU00176"/>
    </source>
</evidence>
<evidence type="ECO:0000256" key="4">
    <source>
        <dbReference type="SAM" id="MobiDB-lite"/>
    </source>
</evidence>
<evidence type="ECO:0000305" key="5"/>
<organism>
    <name type="scientific">Danio rerio</name>
    <name type="common">Zebrafish</name>
    <name type="synonym">Brachydanio rerio</name>
    <dbReference type="NCBI Taxonomy" id="7955"/>
    <lineage>
        <taxon>Eukaryota</taxon>
        <taxon>Metazoa</taxon>
        <taxon>Chordata</taxon>
        <taxon>Craniata</taxon>
        <taxon>Vertebrata</taxon>
        <taxon>Euteleostomi</taxon>
        <taxon>Actinopterygii</taxon>
        <taxon>Neopterygii</taxon>
        <taxon>Teleostei</taxon>
        <taxon>Ostariophysi</taxon>
        <taxon>Cypriniformes</taxon>
        <taxon>Danionidae</taxon>
        <taxon>Danioninae</taxon>
        <taxon>Danio</taxon>
    </lineage>
</organism>
<protein>
    <recommendedName>
        <fullName>Cytoplasmic polyadenylation element-binding protein 4</fullName>
        <shortName>CPE-BP4</shortName>
        <shortName>CPE-binding protein 4</shortName>
        <shortName>CPEB-4</shortName>
    </recommendedName>
</protein>
<gene>
    <name type="primary">cpeb4</name>
    <name type="ORF">zgc:66166</name>
</gene>
<name>CPEB4_DANRE</name>
<sequence>MQDDILESEMSKAPQLQQESQEGQDKQTLSPPGHQEPPGIISELDNALPEENQLEKGTMENANGKETLRLESPVLSGFDYQETTGIGTLAQSSSSSSSSLTGFSSWSTAMPPNPSTLIEEVGFFNQAATTNNAPPPLLFQSFSHHTSTGFGGNFSHQIGPLSQHHPSPHPHFQHPHNQHRRSSASPHPPPFSHRSAAFNQLPHLGNNLSKPPSPWGSYQSPSSTPSSTSWSPGGGYGGWGSSQGREYRRGGVNPLNSISPLKKSFPNNQTQTQKYPRNNSGFNTKPWVEDTINRNESIFPFQERSRSFDGFSMHSLENSLIDIMRAEQDSLKGHSSLFPMEDERSYGEDERSDQSLSGLGSPHSFPHQNGERIERYSRKVFVGGLPPDIDEDEITASFRRFGHLFVDWPHKAESKSYFPPKGYAFLLFQDESSVQALIDACMEEDGKLYLCVSSPTIKDKPVQIRPWNLNDSDFVMDGSQPLDPRKTIFVGGVPRPLRAVELAMIMDRLYGGVCYAGIDTDPELKYPKGAGRVAFSNQQSYIAAISARFVQLQHGEIDKRVEVKPYVLDDQLCDECQGTRCGGKFAPFFCANVTCLQYYCEYCWAAIHSRAGREFHKPLVKEGGDRPRHISFRWN</sequence>
<dbReference type="EMBL" id="BC055522">
    <property type="protein sequence ID" value="AAH55522.1"/>
    <property type="status" value="ALT_INIT"/>
    <property type="molecule type" value="mRNA"/>
</dbReference>
<dbReference type="RefSeq" id="NP_957275.1">
    <property type="nucleotide sequence ID" value="NM_200981.1"/>
</dbReference>
<dbReference type="BMRB" id="Q7SXN4"/>
<dbReference type="SMR" id="Q7SXN4"/>
<dbReference type="FunCoup" id="Q7SXN4">
    <property type="interactions" value="47"/>
</dbReference>
<dbReference type="STRING" id="7955.ENSDARP00000073682"/>
<dbReference type="PaxDb" id="7955-ENSDARP00000109818"/>
<dbReference type="GeneID" id="393956"/>
<dbReference type="KEGG" id="dre:393956"/>
<dbReference type="AGR" id="ZFIN:ZDB-GENE-040426-1557"/>
<dbReference type="CTD" id="393956"/>
<dbReference type="ZFIN" id="ZDB-GENE-040426-1557">
    <property type="gene designation" value="cpeb4a"/>
</dbReference>
<dbReference type="eggNOG" id="KOG0129">
    <property type="taxonomic scope" value="Eukaryota"/>
</dbReference>
<dbReference type="InParanoid" id="Q7SXN4"/>
<dbReference type="OrthoDB" id="10033548at2759"/>
<dbReference type="PRO" id="PR:Q7SXN4"/>
<dbReference type="Proteomes" id="UP000000437">
    <property type="component" value="Alternate scaffold 14"/>
</dbReference>
<dbReference type="Proteomes" id="UP000000437">
    <property type="component" value="Chromosome 14"/>
</dbReference>
<dbReference type="GO" id="GO:0005737">
    <property type="term" value="C:cytoplasm"/>
    <property type="evidence" value="ECO:0000250"/>
    <property type="project" value="UniProtKB"/>
</dbReference>
<dbReference type="GO" id="GO:0030425">
    <property type="term" value="C:dendrite"/>
    <property type="evidence" value="ECO:0000250"/>
    <property type="project" value="UniProtKB"/>
</dbReference>
<dbReference type="GO" id="GO:0043197">
    <property type="term" value="C:dendritic spine"/>
    <property type="evidence" value="ECO:0007669"/>
    <property type="project" value="UniProtKB-SubCell"/>
</dbReference>
<dbReference type="GO" id="GO:0005783">
    <property type="term" value="C:endoplasmic reticulum"/>
    <property type="evidence" value="ECO:0000250"/>
    <property type="project" value="UniProtKB"/>
</dbReference>
<dbReference type="GO" id="GO:0030426">
    <property type="term" value="C:growth cone"/>
    <property type="evidence" value="ECO:0007669"/>
    <property type="project" value="UniProtKB-SubCell"/>
</dbReference>
<dbReference type="GO" id="GO:0043005">
    <property type="term" value="C:neuron projection"/>
    <property type="evidence" value="ECO:0000318"/>
    <property type="project" value="GO_Central"/>
</dbReference>
<dbReference type="GO" id="GO:0005634">
    <property type="term" value="C:nucleus"/>
    <property type="evidence" value="ECO:0000250"/>
    <property type="project" value="UniProtKB"/>
</dbReference>
<dbReference type="GO" id="GO:0048471">
    <property type="term" value="C:perinuclear region of cytoplasm"/>
    <property type="evidence" value="ECO:0007669"/>
    <property type="project" value="UniProtKB-SubCell"/>
</dbReference>
<dbReference type="GO" id="GO:0014069">
    <property type="term" value="C:postsynaptic density"/>
    <property type="evidence" value="ECO:0000250"/>
    <property type="project" value="UniProtKB"/>
</dbReference>
<dbReference type="GO" id="GO:0045202">
    <property type="term" value="C:synapse"/>
    <property type="evidence" value="ECO:0000318"/>
    <property type="project" value="GO_Central"/>
</dbReference>
<dbReference type="GO" id="GO:0003730">
    <property type="term" value="F:mRNA 3'-UTR binding"/>
    <property type="evidence" value="ECO:0000318"/>
    <property type="project" value="GO_Central"/>
</dbReference>
<dbReference type="GO" id="GO:0000900">
    <property type="term" value="F:mRNA regulatory element binding translation repressor activity"/>
    <property type="evidence" value="ECO:0000318"/>
    <property type="project" value="GO_Central"/>
</dbReference>
<dbReference type="GO" id="GO:0043022">
    <property type="term" value="F:ribosome binding"/>
    <property type="evidence" value="ECO:0000318"/>
    <property type="project" value="GO_Central"/>
</dbReference>
<dbReference type="GO" id="GO:0008135">
    <property type="term" value="F:translation factor activity, RNA binding"/>
    <property type="evidence" value="ECO:0000318"/>
    <property type="project" value="GO_Central"/>
</dbReference>
<dbReference type="GO" id="GO:0071230">
    <property type="term" value="P:cellular response to amino acid stimulus"/>
    <property type="evidence" value="ECO:0000250"/>
    <property type="project" value="UniProtKB"/>
</dbReference>
<dbReference type="GO" id="GO:0036294">
    <property type="term" value="P:cellular response to decreased oxygen levels"/>
    <property type="evidence" value="ECO:0000250"/>
    <property type="project" value="UniProtKB"/>
</dbReference>
<dbReference type="GO" id="GO:0042149">
    <property type="term" value="P:cellular response to glucose starvation"/>
    <property type="evidence" value="ECO:0000250"/>
    <property type="project" value="UniProtKB"/>
</dbReference>
<dbReference type="GO" id="GO:0035235">
    <property type="term" value="P:ionotropic glutamate receptor signaling pathway"/>
    <property type="evidence" value="ECO:0000250"/>
    <property type="project" value="UniProtKB"/>
</dbReference>
<dbReference type="GO" id="GO:2000766">
    <property type="term" value="P:negative regulation of cytoplasmic translation"/>
    <property type="evidence" value="ECO:0000318"/>
    <property type="project" value="GO_Central"/>
</dbReference>
<dbReference type="GO" id="GO:0043524">
    <property type="term" value="P:negative regulation of neuron apoptotic process"/>
    <property type="evidence" value="ECO:0000250"/>
    <property type="project" value="UniProtKB"/>
</dbReference>
<dbReference type="GO" id="GO:0002931">
    <property type="term" value="P:response to ischemia"/>
    <property type="evidence" value="ECO:0000250"/>
    <property type="project" value="UniProtKB"/>
</dbReference>
<dbReference type="CDD" id="cd19757">
    <property type="entry name" value="Bbox1"/>
    <property type="match status" value="1"/>
</dbReference>
<dbReference type="CDD" id="cd12724">
    <property type="entry name" value="RRM1_CPEB2_like"/>
    <property type="match status" value="1"/>
</dbReference>
<dbReference type="CDD" id="cd12726">
    <property type="entry name" value="RRM2_CPEB2_like"/>
    <property type="match status" value="1"/>
</dbReference>
<dbReference type="FunFam" id="3.30.70.330:FF:000008">
    <property type="entry name" value="Cytoplasmic polyadenylation element-binding 2 isoform X2"/>
    <property type="match status" value="1"/>
</dbReference>
<dbReference type="FunFam" id="4.10.640.40:FF:000001">
    <property type="entry name" value="Cytoplasmic polyadenylation element-binding 2 isoform X2"/>
    <property type="match status" value="1"/>
</dbReference>
<dbReference type="FunFam" id="3.30.70.330:FF:000009">
    <property type="entry name" value="cytoplasmic polyadenylation element-binding protein 2 isoform X1"/>
    <property type="match status" value="1"/>
</dbReference>
<dbReference type="Gene3D" id="3.30.70.330">
    <property type="match status" value="2"/>
</dbReference>
<dbReference type="Gene3D" id="4.10.640.40">
    <property type="entry name" value="Cytoplasmic polyadenylation element-binding protein, ZZ domain"/>
    <property type="match status" value="1"/>
</dbReference>
<dbReference type="InterPro" id="IPR032296">
    <property type="entry name" value="CEBP_ZZ"/>
</dbReference>
<dbReference type="InterPro" id="IPR038446">
    <property type="entry name" value="CEBP_ZZ_sf"/>
</dbReference>
<dbReference type="InterPro" id="IPR034819">
    <property type="entry name" value="CPEB"/>
</dbReference>
<dbReference type="InterPro" id="IPR012677">
    <property type="entry name" value="Nucleotide-bd_a/b_plait_sf"/>
</dbReference>
<dbReference type="InterPro" id="IPR035979">
    <property type="entry name" value="RBD_domain_sf"/>
</dbReference>
<dbReference type="InterPro" id="IPR000504">
    <property type="entry name" value="RRM_dom"/>
</dbReference>
<dbReference type="PANTHER" id="PTHR12566">
    <property type="entry name" value="CYTOPLASMIC POLYADENYLATION ELEMENT BINDING PROTEIN CPEB"/>
    <property type="match status" value="1"/>
</dbReference>
<dbReference type="PANTHER" id="PTHR12566:SF2">
    <property type="entry name" value="CYTOPLASMIC POLYADENYLATION ELEMENT-BINDING PROTEIN 4"/>
    <property type="match status" value="1"/>
</dbReference>
<dbReference type="Pfam" id="PF16366">
    <property type="entry name" value="CEBP_ZZ"/>
    <property type="match status" value="1"/>
</dbReference>
<dbReference type="Pfam" id="PF16367">
    <property type="entry name" value="RRM_7"/>
    <property type="match status" value="1"/>
</dbReference>
<dbReference type="SMART" id="SM00360">
    <property type="entry name" value="RRM"/>
    <property type="match status" value="2"/>
</dbReference>
<dbReference type="SUPFAM" id="SSF54928">
    <property type="entry name" value="RNA-binding domain, RBD"/>
    <property type="match status" value="1"/>
</dbReference>
<dbReference type="PROSITE" id="PS50102">
    <property type="entry name" value="RRM"/>
    <property type="match status" value="2"/>
</dbReference>
<comment type="function">
    <text evidence="1">Sequence-specific RNA-binding protein that binds to the cytoplasmic polyadenylation element (CPE), an uridine-rich sequence element (consensus sequence 5'-UUUUUAU-3') within the mRNA 3'-UTR. RNA binding results in a clear conformational change analogous to the Venus fly trap mechanism.</text>
</comment>
<comment type="subcellular location">
    <subcellularLocation>
        <location evidence="2">Cytoplasm</location>
    </subcellularLocation>
    <subcellularLocation>
        <location evidence="2">Cell projection</location>
        <location evidence="2">Dendrite</location>
    </subcellularLocation>
    <subcellularLocation>
        <location evidence="2">Cell projection</location>
        <location evidence="2">Dendritic spine</location>
    </subcellularLocation>
    <subcellularLocation>
        <location evidence="2">Postsynaptic density</location>
    </subcellularLocation>
    <subcellularLocation>
        <location evidence="2">Cell projection</location>
        <location evidence="2">Axon</location>
    </subcellularLocation>
    <subcellularLocation>
        <location evidence="2">Cell projection</location>
        <location evidence="2">Growth cone</location>
    </subcellularLocation>
    <subcellularLocation>
        <location evidence="2">Endoplasmic reticulum</location>
    </subcellularLocation>
    <subcellularLocation>
        <location evidence="2">Cytoplasm</location>
        <location evidence="2">Perinuclear region</location>
    </subcellularLocation>
</comment>
<comment type="similarity">
    <text evidence="5">Belongs to the RRM CPEB family.</text>
</comment>
<comment type="sequence caution" evidence="5">
    <conflict type="erroneous initiation">
        <sequence resource="EMBL-CDS" id="AAH55522"/>
    </conflict>
</comment>
<proteinExistence type="evidence at transcript level"/>
<keyword id="KW-0966">Cell projection</keyword>
<keyword id="KW-0963">Cytoplasm</keyword>
<keyword id="KW-0256">Endoplasmic reticulum</keyword>
<keyword id="KW-1185">Reference proteome</keyword>
<keyword id="KW-0677">Repeat</keyword>
<keyword id="KW-0694">RNA-binding</keyword>
<keyword id="KW-0770">Synapse</keyword>
<accession>Q7SXN4</accession>